<reference key="1">
    <citation type="submission" date="2007-02" db="EMBL/GenBank/DDBJ databases">
        <title>Complete sequence of chromosome of Yersinia pestis Pestoides F.</title>
        <authorList>
            <consortium name="US DOE Joint Genome Institute"/>
            <person name="Copeland A."/>
            <person name="Lucas S."/>
            <person name="Lapidus A."/>
            <person name="Barry K."/>
            <person name="Detter J.C."/>
            <person name="Glavina del Rio T."/>
            <person name="Hammon N."/>
            <person name="Israni S."/>
            <person name="Dalin E."/>
            <person name="Tice H."/>
            <person name="Pitluck S."/>
            <person name="Di Bartolo G."/>
            <person name="Chain P."/>
            <person name="Malfatti S."/>
            <person name="Shin M."/>
            <person name="Vergez L."/>
            <person name="Schmutz J."/>
            <person name="Larimer F."/>
            <person name="Land M."/>
            <person name="Hauser L."/>
            <person name="Worsham P."/>
            <person name="Chu M."/>
            <person name="Bearden S."/>
            <person name="Garcia E."/>
            <person name="Richardson P."/>
        </authorList>
    </citation>
    <scope>NUCLEOTIDE SEQUENCE [LARGE SCALE GENOMIC DNA]</scope>
    <source>
        <strain>Pestoides F</strain>
    </source>
</reference>
<dbReference type="EC" id="2.4.2.29" evidence="1"/>
<dbReference type="EMBL" id="CP000668">
    <property type="protein sequence ID" value="ABP41188.1"/>
    <property type="molecule type" value="Genomic_DNA"/>
</dbReference>
<dbReference type="RefSeq" id="WP_002208672.1">
    <property type="nucleotide sequence ID" value="NZ_CP009715.1"/>
</dbReference>
<dbReference type="SMR" id="A4TPH6"/>
<dbReference type="GeneID" id="57975522"/>
<dbReference type="KEGG" id="ypp:YPDSF_2826"/>
<dbReference type="PATRIC" id="fig|386656.14.peg.84"/>
<dbReference type="UniPathway" id="UPA00392"/>
<dbReference type="GO" id="GO:0005829">
    <property type="term" value="C:cytosol"/>
    <property type="evidence" value="ECO:0007669"/>
    <property type="project" value="TreeGrafter"/>
</dbReference>
<dbReference type="GO" id="GO:0046872">
    <property type="term" value="F:metal ion binding"/>
    <property type="evidence" value="ECO:0007669"/>
    <property type="project" value="UniProtKB-KW"/>
</dbReference>
<dbReference type="GO" id="GO:0008479">
    <property type="term" value="F:tRNA-guanosine(34) queuine transglycosylase activity"/>
    <property type="evidence" value="ECO:0007669"/>
    <property type="project" value="UniProtKB-UniRule"/>
</dbReference>
<dbReference type="GO" id="GO:0008616">
    <property type="term" value="P:queuosine biosynthetic process"/>
    <property type="evidence" value="ECO:0007669"/>
    <property type="project" value="UniProtKB-UniRule"/>
</dbReference>
<dbReference type="GO" id="GO:0002099">
    <property type="term" value="P:tRNA wobble guanine modification"/>
    <property type="evidence" value="ECO:0007669"/>
    <property type="project" value="TreeGrafter"/>
</dbReference>
<dbReference type="GO" id="GO:0101030">
    <property type="term" value="P:tRNA-guanine transglycosylation"/>
    <property type="evidence" value="ECO:0007669"/>
    <property type="project" value="InterPro"/>
</dbReference>
<dbReference type="FunFam" id="3.20.20.105:FF:000001">
    <property type="entry name" value="Queuine tRNA-ribosyltransferase"/>
    <property type="match status" value="1"/>
</dbReference>
<dbReference type="Gene3D" id="3.20.20.105">
    <property type="entry name" value="Queuine tRNA-ribosyltransferase-like"/>
    <property type="match status" value="1"/>
</dbReference>
<dbReference type="HAMAP" id="MF_00168">
    <property type="entry name" value="Q_tRNA_Tgt"/>
    <property type="match status" value="1"/>
</dbReference>
<dbReference type="InterPro" id="IPR050076">
    <property type="entry name" value="ArchSynthase1/Queuine_TRR"/>
</dbReference>
<dbReference type="InterPro" id="IPR004803">
    <property type="entry name" value="TGT"/>
</dbReference>
<dbReference type="InterPro" id="IPR036511">
    <property type="entry name" value="TGT-like_sf"/>
</dbReference>
<dbReference type="InterPro" id="IPR002616">
    <property type="entry name" value="tRNA_ribo_trans-like"/>
</dbReference>
<dbReference type="NCBIfam" id="TIGR00430">
    <property type="entry name" value="Q_tRNA_tgt"/>
    <property type="match status" value="1"/>
</dbReference>
<dbReference type="NCBIfam" id="TIGR00449">
    <property type="entry name" value="tgt_general"/>
    <property type="match status" value="1"/>
</dbReference>
<dbReference type="PANTHER" id="PTHR46499">
    <property type="entry name" value="QUEUINE TRNA-RIBOSYLTRANSFERASE"/>
    <property type="match status" value="1"/>
</dbReference>
<dbReference type="PANTHER" id="PTHR46499:SF1">
    <property type="entry name" value="QUEUINE TRNA-RIBOSYLTRANSFERASE"/>
    <property type="match status" value="1"/>
</dbReference>
<dbReference type="Pfam" id="PF01702">
    <property type="entry name" value="TGT"/>
    <property type="match status" value="1"/>
</dbReference>
<dbReference type="SUPFAM" id="SSF51713">
    <property type="entry name" value="tRNA-guanine transglycosylase"/>
    <property type="match status" value="1"/>
</dbReference>
<protein>
    <recommendedName>
        <fullName evidence="1">Queuine tRNA-ribosyltransferase</fullName>
        <ecNumber evidence="1">2.4.2.29</ecNumber>
    </recommendedName>
    <alternativeName>
        <fullName evidence="1">Guanine insertion enzyme</fullName>
    </alternativeName>
    <alternativeName>
        <fullName evidence="1">tRNA-guanine transglycosylase</fullName>
    </alternativeName>
</protein>
<name>TGT_YERPP</name>
<accession>A4TPH6</accession>
<organism>
    <name type="scientific">Yersinia pestis (strain Pestoides F)</name>
    <dbReference type="NCBI Taxonomy" id="386656"/>
    <lineage>
        <taxon>Bacteria</taxon>
        <taxon>Pseudomonadati</taxon>
        <taxon>Pseudomonadota</taxon>
        <taxon>Gammaproteobacteria</taxon>
        <taxon>Enterobacterales</taxon>
        <taxon>Yersiniaceae</taxon>
        <taxon>Yersinia</taxon>
    </lineage>
</organism>
<comment type="function">
    <text evidence="1">Catalyzes the base-exchange of a guanine (G) residue with the queuine precursor 7-aminomethyl-7-deazaguanine (PreQ1) at position 34 (anticodon wobble position) in tRNAs with GU(N) anticodons (tRNA-Asp, -Asn, -His and -Tyr). Catalysis occurs through a double-displacement mechanism. The nucleophile active site attacks the C1' of nucleotide 34 to detach the guanine base from the RNA, forming a covalent enzyme-RNA intermediate. The proton acceptor active site deprotonates the incoming PreQ1, allowing a nucleophilic attack on the C1' of the ribose to form the product. After dissociation, two additional enzymatic reactions on the tRNA convert PreQ1 to queuine (Q), resulting in the hypermodified nucleoside queuosine (7-(((4,5-cis-dihydroxy-2-cyclopenten-1-yl)amino)methyl)-7-deazaguanosine).</text>
</comment>
<comment type="catalytic activity">
    <reaction evidence="1">
        <text>7-aminomethyl-7-carbaguanine + guanosine(34) in tRNA = 7-aminomethyl-7-carbaguanosine(34) in tRNA + guanine</text>
        <dbReference type="Rhea" id="RHEA:24104"/>
        <dbReference type="Rhea" id="RHEA-COMP:10341"/>
        <dbReference type="Rhea" id="RHEA-COMP:10342"/>
        <dbReference type="ChEBI" id="CHEBI:16235"/>
        <dbReference type="ChEBI" id="CHEBI:58703"/>
        <dbReference type="ChEBI" id="CHEBI:74269"/>
        <dbReference type="ChEBI" id="CHEBI:82833"/>
        <dbReference type="EC" id="2.4.2.29"/>
    </reaction>
</comment>
<comment type="cofactor">
    <cofactor evidence="1">
        <name>Zn(2+)</name>
        <dbReference type="ChEBI" id="CHEBI:29105"/>
    </cofactor>
    <text evidence="1">Binds 1 zinc ion per subunit.</text>
</comment>
<comment type="pathway">
    <text evidence="1">tRNA modification; tRNA-queuosine biosynthesis.</text>
</comment>
<comment type="subunit">
    <text evidence="1">Homodimer. Within each dimer, one monomer is responsible for RNA recognition and catalysis, while the other monomer binds to the replacement base PreQ1.</text>
</comment>
<comment type="similarity">
    <text evidence="1">Belongs to the queuine tRNA-ribosyltransferase family.</text>
</comment>
<evidence type="ECO:0000255" key="1">
    <source>
        <dbReference type="HAMAP-Rule" id="MF_00168"/>
    </source>
</evidence>
<feature type="chain" id="PRO_1000016894" description="Queuine tRNA-ribosyltransferase">
    <location>
        <begin position="1"/>
        <end position="374"/>
    </location>
</feature>
<feature type="region of interest" description="RNA binding" evidence="1">
    <location>
        <begin position="245"/>
        <end position="251"/>
    </location>
</feature>
<feature type="region of interest" description="RNA binding; important for wobble base 34 recognition" evidence="1">
    <location>
        <begin position="269"/>
        <end position="273"/>
    </location>
</feature>
<feature type="active site" description="Proton acceptor" evidence="1">
    <location>
        <position position="89"/>
    </location>
</feature>
<feature type="active site" description="Nucleophile" evidence="1">
    <location>
        <position position="264"/>
    </location>
</feature>
<feature type="binding site" evidence="1">
    <location>
        <begin position="89"/>
        <end position="93"/>
    </location>
    <ligand>
        <name>substrate</name>
    </ligand>
</feature>
<feature type="binding site" evidence="1">
    <location>
        <position position="143"/>
    </location>
    <ligand>
        <name>substrate</name>
    </ligand>
</feature>
<feature type="binding site" evidence="1">
    <location>
        <position position="187"/>
    </location>
    <ligand>
        <name>substrate</name>
    </ligand>
</feature>
<feature type="binding site" evidence="1">
    <location>
        <position position="214"/>
    </location>
    <ligand>
        <name>substrate</name>
    </ligand>
</feature>
<feature type="binding site" evidence="1">
    <location>
        <position position="302"/>
    </location>
    <ligand>
        <name>Zn(2+)</name>
        <dbReference type="ChEBI" id="CHEBI:29105"/>
    </ligand>
</feature>
<feature type="binding site" evidence="1">
    <location>
        <position position="304"/>
    </location>
    <ligand>
        <name>Zn(2+)</name>
        <dbReference type="ChEBI" id="CHEBI:29105"/>
    </ligand>
</feature>
<feature type="binding site" evidence="1">
    <location>
        <position position="307"/>
    </location>
    <ligand>
        <name>Zn(2+)</name>
        <dbReference type="ChEBI" id="CHEBI:29105"/>
    </ligand>
</feature>
<feature type="binding site" evidence="1">
    <location>
        <position position="333"/>
    </location>
    <ligand>
        <name>Zn(2+)</name>
        <dbReference type="ChEBI" id="CHEBI:29105"/>
    </ligand>
</feature>
<proteinExistence type="inferred from homology"/>
<keyword id="KW-0328">Glycosyltransferase</keyword>
<keyword id="KW-0479">Metal-binding</keyword>
<keyword id="KW-0671">Queuosine biosynthesis</keyword>
<keyword id="KW-0808">Transferase</keyword>
<keyword id="KW-0819">tRNA processing</keyword>
<keyword id="KW-0862">Zinc</keyword>
<sequence>MKYELQKTDGRARRGRLVFERGVVETPAFMPVGTYGTVKGMTPEEVKETGAQILLGNTFHLWLRPGQEIMKLHGDLHDFMQWHGPILTDSGGFQVFSLGAMRKIKEEGVHFKNPINGDSVFLSPEKSMEIQYDLGSDIVMIFDECTPYPADWDYAKRSMEMSLRWAARSRQRFDELNNKNALFGIIQGGVYEDLRDVSVKGLVDIGFDGYAVGGLAVGEPKEDMHRILEHVCPQIPEDKPRYLMGVGKPEDLVEGVRRGIDMFDCVMPTRNARNGHLFVTDGVVKIRNAKHKDDTATLDEHCDCYTCRHYSRAYLHHLDRCNEILGARLNTIHNLRYYQRLMAGLRQAIEEGKLEHFVEDFYGRIGKPVPPLNV</sequence>
<gene>
    <name evidence="1" type="primary">tgt</name>
    <name type="ordered locus">YPDSF_2826</name>
</gene>